<dbReference type="EMBL" id="BX936398">
    <property type="protein sequence ID" value="CAH19287.1"/>
    <property type="molecule type" value="Genomic_DNA"/>
</dbReference>
<dbReference type="RefSeq" id="WP_002208991.1">
    <property type="nucleotide sequence ID" value="NZ_CP009712.1"/>
</dbReference>
<dbReference type="SMR" id="Q66GD5"/>
<dbReference type="GeneID" id="96663531"/>
<dbReference type="KEGG" id="ypo:BZ17_2548"/>
<dbReference type="KEGG" id="yps:YPTB0047"/>
<dbReference type="PATRIC" id="fig|273123.14.peg.2673"/>
<dbReference type="Proteomes" id="UP000001011">
    <property type="component" value="Chromosome"/>
</dbReference>
<dbReference type="GO" id="GO:1990904">
    <property type="term" value="C:ribonucleoprotein complex"/>
    <property type="evidence" value="ECO:0007669"/>
    <property type="project" value="UniProtKB-KW"/>
</dbReference>
<dbReference type="GO" id="GO:0005840">
    <property type="term" value="C:ribosome"/>
    <property type="evidence" value="ECO:0007669"/>
    <property type="project" value="UniProtKB-KW"/>
</dbReference>
<dbReference type="GO" id="GO:0003735">
    <property type="term" value="F:structural constituent of ribosome"/>
    <property type="evidence" value="ECO:0007669"/>
    <property type="project" value="InterPro"/>
</dbReference>
<dbReference type="GO" id="GO:0006412">
    <property type="term" value="P:translation"/>
    <property type="evidence" value="ECO:0007669"/>
    <property type="project" value="UniProtKB-UniRule"/>
</dbReference>
<dbReference type="FunFam" id="2.30.170.40:FF:000001">
    <property type="entry name" value="50S ribosomal protein L28"/>
    <property type="match status" value="1"/>
</dbReference>
<dbReference type="Gene3D" id="2.30.170.40">
    <property type="entry name" value="Ribosomal protein L28/L24"/>
    <property type="match status" value="1"/>
</dbReference>
<dbReference type="HAMAP" id="MF_00373">
    <property type="entry name" value="Ribosomal_bL28"/>
    <property type="match status" value="1"/>
</dbReference>
<dbReference type="InterPro" id="IPR050096">
    <property type="entry name" value="Bacterial_rp_bL28"/>
</dbReference>
<dbReference type="InterPro" id="IPR026569">
    <property type="entry name" value="Ribosomal_bL28"/>
</dbReference>
<dbReference type="InterPro" id="IPR034704">
    <property type="entry name" value="Ribosomal_bL28/bL31-like_sf"/>
</dbReference>
<dbReference type="InterPro" id="IPR001383">
    <property type="entry name" value="Ribosomal_bL28_bact-type"/>
</dbReference>
<dbReference type="InterPro" id="IPR037147">
    <property type="entry name" value="Ribosomal_bL28_sf"/>
</dbReference>
<dbReference type="NCBIfam" id="TIGR00009">
    <property type="entry name" value="L28"/>
    <property type="match status" value="1"/>
</dbReference>
<dbReference type="PANTHER" id="PTHR39080">
    <property type="entry name" value="50S RIBOSOMAL PROTEIN L28"/>
    <property type="match status" value="1"/>
</dbReference>
<dbReference type="PANTHER" id="PTHR39080:SF1">
    <property type="entry name" value="LARGE RIBOSOMAL SUBUNIT PROTEIN BL28A"/>
    <property type="match status" value="1"/>
</dbReference>
<dbReference type="Pfam" id="PF00830">
    <property type="entry name" value="Ribosomal_L28"/>
    <property type="match status" value="1"/>
</dbReference>
<dbReference type="SUPFAM" id="SSF143800">
    <property type="entry name" value="L28p-like"/>
    <property type="match status" value="1"/>
</dbReference>
<protein>
    <recommendedName>
        <fullName evidence="1">Large ribosomal subunit protein bL28</fullName>
    </recommendedName>
    <alternativeName>
        <fullName evidence="3">50S ribosomal protein L28</fullName>
    </alternativeName>
</protein>
<evidence type="ECO:0000255" key="1">
    <source>
        <dbReference type="HAMAP-Rule" id="MF_00373"/>
    </source>
</evidence>
<evidence type="ECO:0000256" key="2">
    <source>
        <dbReference type="SAM" id="MobiDB-lite"/>
    </source>
</evidence>
<evidence type="ECO:0000305" key="3"/>
<sequence>MSRVCQVTGKRPMSGNNRSHAMNATKRRFLPNLHSHRFWVEGEKRFVTLRVSAKGMRVIDKKGIETVLAEIRARGEKY</sequence>
<comment type="similarity">
    <text evidence="1">Belongs to the bacterial ribosomal protein bL28 family.</text>
</comment>
<proteinExistence type="inferred from homology"/>
<accession>Q66GD5</accession>
<organism>
    <name type="scientific">Yersinia pseudotuberculosis serotype I (strain IP32953)</name>
    <dbReference type="NCBI Taxonomy" id="273123"/>
    <lineage>
        <taxon>Bacteria</taxon>
        <taxon>Pseudomonadati</taxon>
        <taxon>Pseudomonadota</taxon>
        <taxon>Gammaproteobacteria</taxon>
        <taxon>Enterobacterales</taxon>
        <taxon>Yersiniaceae</taxon>
        <taxon>Yersinia</taxon>
    </lineage>
</organism>
<name>RL28_YERPS</name>
<keyword id="KW-0687">Ribonucleoprotein</keyword>
<keyword id="KW-0689">Ribosomal protein</keyword>
<feature type="chain" id="PRO_0000178598" description="Large ribosomal subunit protein bL28">
    <location>
        <begin position="1"/>
        <end position="78"/>
    </location>
</feature>
<feature type="region of interest" description="Disordered" evidence="2">
    <location>
        <begin position="1"/>
        <end position="22"/>
    </location>
</feature>
<gene>
    <name evidence="1" type="primary">rpmB</name>
    <name type="ordered locus">YPTB0047</name>
</gene>
<reference key="1">
    <citation type="journal article" date="2004" name="Proc. Natl. Acad. Sci. U.S.A.">
        <title>Insights into the evolution of Yersinia pestis through whole-genome comparison with Yersinia pseudotuberculosis.</title>
        <authorList>
            <person name="Chain P.S.G."/>
            <person name="Carniel E."/>
            <person name="Larimer F.W."/>
            <person name="Lamerdin J."/>
            <person name="Stoutland P.O."/>
            <person name="Regala W.M."/>
            <person name="Georgescu A.M."/>
            <person name="Vergez L.M."/>
            <person name="Land M.L."/>
            <person name="Motin V.L."/>
            <person name="Brubaker R.R."/>
            <person name="Fowler J."/>
            <person name="Hinnebusch J."/>
            <person name="Marceau M."/>
            <person name="Medigue C."/>
            <person name="Simonet M."/>
            <person name="Chenal-Francisque V."/>
            <person name="Souza B."/>
            <person name="Dacheux D."/>
            <person name="Elliott J.M."/>
            <person name="Derbise A."/>
            <person name="Hauser L.J."/>
            <person name="Garcia E."/>
        </authorList>
    </citation>
    <scope>NUCLEOTIDE SEQUENCE [LARGE SCALE GENOMIC DNA]</scope>
    <source>
        <strain>IP32953</strain>
    </source>
</reference>